<dbReference type="EMBL" id="CP000143">
    <property type="protein sequence ID" value="ABA79367.1"/>
    <property type="molecule type" value="Genomic_DNA"/>
</dbReference>
<dbReference type="RefSeq" id="WP_011338056.1">
    <property type="nucleotide sequence ID" value="NC_007493.2"/>
</dbReference>
<dbReference type="RefSeq" id="YP_353268.1">
    <property type="nucleotide sequence ID" value="NC_007493.2"/>
</dbReference>
<dbReference type="SMR" id="Q3J1G7"/>
<dbReference type="STRING" id="272943.RSP_0196"/>
<dbReference type="EnsemblBacteria" id="ABA79367">
    <property type="protein sequence ID" value="ABA79367"/>
    <property type="gene ID" value="RSP_0196"/>
</dbReference>
<dbReference type="GeneID" id="3719485"/>
<dbReference type="KEGG" id="rsp:RSP_0196"/>
<dbReference type="PATRIC" id="fig|272943.9.peg.2138"/>
<dbReference type="eggNOG" id="COG1219">
    <property type="taxonomic scope" value="Bacteria"/>
</dbReference>
<dbReference type="OrthoDB" id="9804062at2"/>
<dbReference type="PhylomeDB" id="Q3J1G7"/>
<dbReference type="Proteomes" id="UP000002703">
    <property type="component" value="Chromosome 1"/>
</dbReference>
<dbReference type="GO" id="GO:0009376">
    <property type="term" value="C:HslUV protease complex"/>
    <property type="evidence" value="ECO:0007669"/>
    <property type="project" value="TreeGrafter"/>
</dbReference>
<dbReference type="GO" id="GO:0005524">
    <property type="term" value="F:ATP binding"/>
    <property type="evidence" value="ECO:0007669"/>
    <property type="project" value="UniProtKB-UniRule"/>
</dbReference>
<dbReference type="GO" id="GO:0016887">
    <property type="term" value="F:ATP hydrolysis activity"/>
    <property type="evidence" value="ECO:0007669"/>
    <property type="project" value="InterPro"/>
</dbReference>
<dbReference type="GO" id="GO:0140662">
    <property type="term" value="F:ATP-dependent protein folding chaperone"/>
    <property type="evidence" value="ECO:0007669"/>
    <property type="project" value="InterPro"/>
</dbReference>
<dbReference type="GO" id="GO:0046983">
    <property type="term" value="F:protein dimerization activity"/>
    <property type="evidence" value="ECO:0007669"/>
    <property type="project" value="InterPro"/>
</dbReference>
<dbReference type="GO" id="GO:0051082">
    <property type="term" value="F:unfolded protein binding"/>
    <property type="evidence" value="ECO:0007669"/>
    <property type="project" value="UniProtKB-UniRule"/>
</dbReference>
<dbReference type="GO" id="GO:0008270">
    <property type="term" value="F:zinc ion binding"/>
    <property type="evidence" value="ECO:0007669"/>
    <property type="project" value="InterPro"/>
</dbReference>
<dbReference type="GO" id="GO:0051301">
    <property type="term" value="P:cell division"/>
    <property type="evidence" value="ECO:0007669"/>
    <property type="project" value="TreeGrafter"/>
</dbReference>
<dbReference type="GO" id="GO:0051603">
    <property type="term" value="P:proteolysis involved in protein catabolic process"/>
    <property type="evidence" value="ECO:0007669"/>
    <property type="project" value="TreeGrafter"/>
</dbReference>
<dbReference type="CDD" id="cd19497">
    <property type="entry name" value="RecA-like_ClpX"/>
    <property type="match status" value="1"/>
</dbReference>
<dbReference type="FunFam" id="1.10.8.60:FF:000002">
    <property type="entry name" value="ATP-dependent Clp protease ATP-binding subunit ClpX"/>
    <property type="match status" value="1"/>
</dbReference>
<dbReference type="FunFam" id="3.40.50.300:FF:000005">
    <property type="entry name" value="ATP-dependent Clp protease ATP-binding subunit ClpX"/>
    <property type="match status" value="1"/>
</dbReference>
<dbReference type="Gene3D" id="1.10.8.60">
    <property type="match status" value="1"/>
</dbReference>
<dbReference type="Gene3D" id="6.20.220.10">
    <property type="entry name" value="ClpX chaperone, C4-type zinc finger domain"/>
    <property type="match status" value="1"/>
</dbReference>
<dbReference type="Gene3D" id="3.40.50.300">
    <property type="entry name" value="P-loop containing nucleotide triphosphate hydrolases"/>
    <property type="match status" value="1"/>
</dbReference>
<dbReference type="HAMAP" id="MF_00175">
    <property type="entry name" value="ClpX"/>
    <property type="match status" value="1"/>
</dbReference>
<dbReference type="InterPro" id="IPR003593">
    <property type="entry name" value="AAA+_ATPase"/>
</dbReference>
<dbReference type="InterPro" id="IPR050052">
    <property type="entry name" value="ATP-dep_Clp_protease_ClpX"/>
</dbReference>
<dbReference type="InterPro" id="IPR003959">
    <property type="entry name" value="ATPase_AAA_core"/>
</dbReference>
<dbReference type="InterPro" id="IPR019489">
    <property type="entry name" value="Clp_ATPase_C"/>
</dbReference>
<dbReference type="InterPro" id="IPR004487">
    <property type="entry name" value="Clp_protease_ATP-bd_su_ClpX"/>
</dbReference>
<dbReference type="InterPro" id="IPR046425">
    <property type="entry name" value="ClpX_bact"/>
</dbReference>
<dbReference type="InterPro" id="IPR027417">
    <property type="entry name" value="P-loop_NTPase"/>
</dbReference>
<dbReference type="InterPro" id="IPR010603">
    <property type="entry name" value="Znf_CppX_C4"/>
</dbReference>
<dbReference type="InterPro" id="IPR038366">
    <property type="entry name" value="Znf_CppX_C4_sf"/>
</dbReference>
<dbReference type="NCBIfam" id="TIGR00382">
    <property type="entry name" value="clpX"/>
    <property type="match status" value="1"/>
</dbReference>
<dbReference type="NCBIfam" id="NF003745">
    <property type="entry name" value="PRK05342.1"/>
    <property type="match status" value="1"/>
</dbReference>
<dbReference type="PANTHER" id="PTHR48102:SF7">
    <property type="entry name" value="ATP-DEPENDENT CLP PROTEASE ATP-BINDING SUBUNIT CLPX-LIKE, MITOCHONDRIAL"/>
    <property type="match status" value="1"/>
</dbReference>
<dbReference type="PANTHER" id="PTHR48102">
    <property type="entry name" value="ATP-DEPENDENT CLP PROTEASE ATP-BINDING SUBUNIT CLPX-LIKE, MITOCHONDRIAL-RELATED"/>
    <property type="match status" value="1"/>
</dbReference>
<dbReference type="Pfam" id="PF07724">
    <property type="entry name" value="AAA_2"/>
    <property type="match status" value="1"/>
</dbReference>
<dbReference type="Pfam" id="PF10431">
    <property type="entry name" value="ClpB_D2-small"/>
    <property type="match status" value="1"/>
</dbReference>
<dbReference type="Pfam" id="PF06689">
    <property type="entry name" value="zf-C4_ClpX"/>
    <property type="match status" value="1"/>
</dbReference>
<dbReference type="SMART" id="SM00382">
    <property type="entry name" value="AAA"/>
    <property type="match status" value="1"/>
</dbReference>
<dbReference type="SMART" id="SM01086">
    <property type="entry name" value="ClpB_D2-small"/>
    <property type="match status" value="1"/>
</dbReference>
<dbReference type="SMART" id="SM00994">
    <property type="entry name" value="zf-C4_ClpX"/>
    <property type="match status" value="1"/>
</dbReference>
<dbReference type="SUPFAM" id="SSF57716">
    <property type="entry name" value="Glucocorticoid receptor-like (DNA-binding domain)"/>
    <property type="match status" value="1"/>
</dbReference>
<dbReference type="SUPFAM" id="SSF52540">
    <property type="entry name" value="P-loop containing nucleoside triphosphate hydrolases"/>
    <property type="match status" value="1"/>
</dbReference>
<dbReference type="PROSITE" id="PS51902">
    <property type="entry name" value="CLPX_ZB"/>
    <property type="match status" value="1"/>
</dbReference>
<organism>
    <name type="scientific">Cereibacter sphaeroides (strain ATCC 17023 / DSM 158 / JCM 6121 / CCUG 31486 / LMG 2827 / NBRC 12203 / NCIMB 8253 / ATH 2.4.1.)</name>
    <name type="common">Rhodobacter sphaeroides</name>
    <dbReference type="NCBI Taxonomy" id="272943"/>
    <lineage>
        <taxon>Bacteria</taxon>
        <taxon>Pseudomonadati</taxon>
        <taxon>Pseudomonadota</taxon>
        <taxon>Alphaproteobacteria</taxon>
        <taxon>Rhodobacterales</taxon>
        <taxon>Paracoccaceae</taxon>
        <taxon>Cereibacter</taxon>
    </lineage>
</organism>
<protein>
    <recommendedName>
        <fullName evidence="1">ATP-dependent Clp protease ATP-binding subunit ClpX</fullName>
    </recommendedName>
</protein>
<evidence type="ECO:0000255" key="1">
    <source>
        <dbReference type="HAMAP-Rule" id="MF_00175"/>
    </source>
</evidence>
<evidence type="ECO:0000255" key="2">
    <source>
        <dbReference type="PROSITE-ProRule" id="PRU01250"/>
    </source>
</evidence>
<gene>
    <name evidence="1" type="primary">clpX</name>
    <name type="ordered locus">RHOS4_17990</name>
    <name type="ORF">RSP_0196</name>
</gene>
<name>CLPX_CERS4</name>
<accession>Q3J1G7</accession>
<feature type="chain" id="PRO_1000024639" description="ATP-dependent Clp protease ATP-binding subunit ClpX">
    <location>
        <begin position="1"/>
        <end position="421"/>
    </location>
</feature>
<feature type="domain" description="ClpX-type ZB" evidence="2">
    <location>
        <begin position="3"/>
        <end position="56"/>
    </location>
</feature>
<feature type="binding site" evidence="2">
    <location>
        <position position="15"/>
    </location>
    <ligand>
        <name>Zn(2+)</name>
        <dbReference type="ChEBI" id="CHEBI:29105"/>
    </ligand>
</feature>
<feature type="binding site" evidence="2">
    <location>
        <position position="18"/>
    </location>
    <ligand>
        <name>Zn(2+)</name>
        <dbReference type="ChEBI" id="CHEBI:29105"/>
    </ligand>
</feature>
<feature type="binding site" evidence="2">
    <location>
        <position position="37"/>
    </location>
    <ligand>
        <name>Zn(2+)</name>
        <dbReference type="ChEBI" id="CHEBI:29105"/>
    </ligand>
</feature>
<feature type="binding site" evidence="2">
    <location>
        <position position="40"/>
    </location>
    <ligand>
        <name>Zn(2+)</name>
        <dbReference type="ChEBI" id="CHEBI:29105"/>
    </ligand>
</feature>
<feature type="binding site" evidence="1">
    <location>
        <begin position="118"/>
        <end position="125"/>
    </location>
    <ligand>
        <name>ATP</name>
        <dbReference type="ChEBI" id="CHEBI:30616"/>
    </ligand>
</feature>
<keyword id="KW-0067">ATP-binding</keyword>
<keyword id="KW-0143">Chaperone</keyword>
<keyword id="KW-0479">Metal-binding</keyword>
<keyword id="KW-0547">Nucleotide-binding</keyword>
<keyword id="KW-1185">Reference proteome</keyword>
<keyword id="KW-0862">Zinc</keyword>
<sequence>MANNTGSDSKNTLYCSFCGKSQHEVRKLIAGPTVFICDECVELCMDIIREETKSTGLKSADGVPTPREICKVLDDYVIGQMHAKRVLSVAVHNHYKRLNHSSKTDIELSKSNILLIGPTGCGKTLLAQTLARILDVPFTMADATTLTEAGYVGEDVENIILKLLQASEYNVERVQRGIVYIDEVDKITRKSDNPSITRDVSGEGVQQALLKIMEGTVASVPPQGGRKHPQQEFLQVDTTNILFICGGAFAGLEKIIAQRGKGSGIGFGAEVKDPDARGVGELFKELEPEDLPKFGLIPEFVGRLPVIATLTDLDEAALVTILTEPKNALVKQYQRLFEIEGVKLTFTADALTAIAKRAIKRKTGARGLRSIMEDILLDTMFELPGLEGVEEVVVNEEAVNSGAKPLLIYTEVTKKKDATAS</sequence>
<proteinExistence type="inferred from homology"/>
<reference key="1">
    <citation type="submission" date="2005-09" db="EMBL/GenBank/DDBJ databases">
        <title>Complete sequence of chromosome 1 of Rhodobacter sphaeroides 2.4.1.</title>
        <authorList>
            <person name="Copeland A."/>
            <person name="Lucas S."/>
            <person name="Lapidus A."/>
            <person name="Barry K."/>
            <person name="Detter J.C."/>
            <person name="Glavina T."/>
            <person name="Hammon N."/>
            <person name="Israni S."/>
            <person name="Pitluck S."/>
            <person name="Richardson P."/>
            <person name="Mackenzie C."/>
            <person name="Choudhary M."/>
            <person name="Larimer F."/>
            <person name="Hauser L.J."/>
            <person name="Land M."/>
            <person name="Donohue T.J."/>
            <person name="Kaplan S."/>
        </authorList>
    </citation>
    <scope>NUCLEOTIDE SEQUENCE [LARGE SCALE GENOMIC DNA]</scope>
    <source>
        <strain>ATCC 17023 / DSM 158 / JCM 6121 / CCUG 31486 / LMG 2827 / NBRC 12203 / NCIMB 8253 / ATH 2.4.1.</strain>
    </source>
</reference>
<comment type="function">
    <text evidence="1">ATP-dependent specificity component of the Clp protease. It directs the protease to specific substrates. Can perform chaperone functions in the absence of ClpP.</text>
</comment>
<comment type="subunit">
    <text evidence="1">Component of the ClpX-ClpP complex. Forms a hexameric ring that, in the presence of ATP, binds to fourteen ClpP subunits assembled into a disk-like structure with a central cavity, resembling the structure of eukaryotic proteasomes.</text>
</comment>
<comment type="similarity">
    <text evidence="1">Belongs to the ClpX chaperone family.</text>
</comment>